<dbReference type="EMBL" id="AK315189">
    <property type="protein sequence ID" value="BAG37629.1"/>
    <property type="molecule type" value="mRNA"/>
</dbReference>
<dbReference type="EMBL" id="CH471054">
    <property type="protein sequence ID" value="EAW97641.1"/>
    <property type="molecule type" value="Genomic_DNA"/>
</dbReference>
<dbReference type="EMBL" id="BC043366">
    <property type="protein sequence ID" value="AAH43366.1"/>
    <property type="molecule type" value="mRNA"/>
</dbReference>
<dbReference type="CCDS" id="CCDS9079.1"/>
<dbReference type="RefSeq" id="NP_001290059.1">
    <property type="nucleotide sequence ID" value="NM_001303130.2"/>
</dbReference>
<dbReference type="RefSeq" id="NP_001350601.1">
    <property type="nucleotide sequence ID" value="NM_001363672.2"/>
</dbReference>
<dbReference type="RefSeq" id="NP_777602.1">
    <property type="nucleotide sequence ID" value="NM_174942.3"/>
</dbReference>
<dbReference type="RefSeq" id="XP_005268861.1">
    <property type="nucleotide sequence ID" value="XM_005268804.4"/>
</dbReference>
<dbReference type="RefSeq" id="XP_011536521.1">
    <property type="nucleotide sequence ID" value="XM_011538219.2"/>
</dbReference>
<dbReference type="RefSeq" id="XP_011536522.1">
    <property type="nucleotide sequence ID" value="XM_011538220.3"/>
</dbReference>
<dbReference type="RefSeq" id="XP_011536523.1">
    <property type="nucleotide sequence ID" value="XM_011538221.3"/>
</dbReference>
<dbReference type="RefSeq" id="XP_016874695.1">
    <property type="nucleotide sequence ID" value="XM_017019206.1"/>
</dbReference>
<dbReference type="RefSeq" id="XP_047284686.1">
    <property type="nucleotide sequence ID" value="XM_047428730.1"/>
</dbReference>
<dbReference type="RefSeq" id="XP_047284687.1">
    <property type="nucleotide sequence ID" value="XM_047428731.1"/>
</dbReference>
<dbReference type="RefSeq" id="XP_047284688.1">
    <property type="nucleotide sequence ID" value="XM_047428732.1"/>
</dbReference>
<dbReference type="RefSeq" id="XP_047284689.1">
    <property type="nucleotide sequence ID" value="XM_047428733.1"/>
</dbReference>
<dbReference type="RefSeq" id="XP_047284690.1">
    <property type="nucleotide sequence ID" value="XM_047428734.1"/>
</dbReference>
<dbReference type="RefSeq" id="XP_047284691.1">
    <property type="nucleotide sequence ID" value="XM_047428735.1"/>
</dbReference>
<dbReference type="RefSeq" id="XP_047284692.1">
    <property type="nucleotide sequence ID" value="XM_047428736.1"/>
</dbReference>
<dbReference type="RefSeq" id="XP_047284693.1">
    <property type="nucleotide sequence ID" value="XM_047428737.1"/>
</dbReference>
<dbReference type="RefSeq" id="XP_054227801.1">
    <property type="nucleotide sequence ID" value="XM_054371826.1"/>
</dbReference>
<dbReference type="RefSeq" id="XP_054227802.1">
    <property type="nucleotide sequence ID" value="XM_054371827.1"/>
</dbReference>
<dbReference type="RefSeq" id="XP_054227803.1">
    <property type="nucleotide sequence ID" value="XM_054371828.1"/>
</dbReference>
<dbReference type="RefSeq" id="XP_054227804.1">
    <property type="nucleotide sequence ID" value="XM_054371829.1"/>
</dbReference>
<dbReference type="RefSeq" id="XP_054227805.1">
    <property type="nucleotide sequence ID" value="XM_054371830.1"/>
</dbReference>
<dbReference type="RefSeq" id="XP_054227806.1">
    <property type="nucleotide sequence ID" value="XM_054371831.1"/>
</dbReference>
<dbReference type="RefSeq" id="XP_054227807.1">
    <property type="nucleotide sequence ID" value="XM_054371832.1"/>
</dbReference>
<dbReference type="RefSeq" id="XP_054227808.1">
    <property type="nucleotide sequence ID" value="XM_054371833.1"/>
</dbReference>
<dbReference type="RefSeq" id="XP_054227809.1">
    <property type="nucleotide sequence ID" value="XM_054371834.1"/>
</dbReference>
<dbReference type="RefSeq" id="XP_054227810.1">
    <property type="nucleotide sequence ID" value="XM_054371835.1"/>
</dbReference>
<dbReference type="RefSeq" id="XP_054227811.1">
    <property type="nucleotide sequence ID" value="XM_054371836.1"/>
</dbReference>
<dbReference type="SMR" id="Q86XJ1"/>
<dbReference type="BioGRID" id="129559">
    <property type="interactions" value="44"/>
</dbReference>
<dbReference type="FunCoup" id="Q86XJ1">
    <property type="interactions" value="233"/>
</dbReference>
<dbReference type="IntAct" id="Q86XJ1">
    <property type="interactions" value="12"/>
</dbReference>
<dbReference type="MINT" id="Q86XJ1"/>
<dbReference type="STRING" id="9606.ENSP00000448955"/>
<dbReference type="GlyGen" id="Q86XJ1">
    <property type="glycosylation" value="2 sites, 1 N-linked glycan (1 site), 1 O-linked glycan (1 site)"/>
</dbReference>
<dbReference type="iPTMnet" id="Q86XJ1"/>
<dbReference type="PhosphoSitePlus" id="Q86XJ1"/>
<dbReference type="BioMuta" id="GAS2L3"/>
<dbReference type="DMDM" id="73919616"/>
<dbReference type="jPOST" id="Q86XJ1"/>
<dbReference type="MassIVE" id="Q86XJ1"/>
<dbReference type="PaxDb" id="9606-ENSP00000448955"/>
<dbReference type="PeptideAtlas" id="Q86XJ1"/>
<dbReference type="ProteomicsDB" id="70285"/>
<dbReference type="Pumba" id="Q86XJ1"/>
<dbReference type="Antibodypedia" id="30346">
    <property type="antibodies" value="104 antibodies from 17 providers"/>
</dbReference>
<dbReference type="DNASU" id="283431"/>
<dbReference type="Ensembl" id="ENST00000266754.9">
    <property type="protein sequence ID" value="ENSP00000266754.5"/>
    <property type="gene ID" value="ENSG00000139354.11"/>
</dbReference>
<dbReference type="Ensembl" id="ENST00000539410.2">
    <property type="protein sequence ID" value="ENSP00000439672.1"/>
    <property type="gene ID" value="ENSG00000139354.11"/>
</dbReference>
<dbReference type="Ensembl" id="ENST00000547754.6">
    <property type="protein sequence ID" value="ENSP00000448955.1"/>
    <property type="gene ID" value="ENSG00000139354.11"/>
</dbReference>
<dbReference type="GeneID" id="283431"/>
<dbReference type="KEGG" id="hsa:283431"/>
<dbReference type="MANE-Select" id="ENST00000547754.6">
    <property type="protein sequence ID" value="ENSP00000448955.1"/>
    <property type="RefSeq nucleotide sequence ID" value="NM_174942.3"/>
    <property type="RefSeq protein sequence ID" value="NP_777602.1"/>
</dbReference>
<dbReference type="UCSC" id="uc001thu.4">
    <property type="organism name" value="human"/>
</dbReference>
<dbReference type="AGR" id="HGNC:27475"/>
<dbReference type="CTD" id="283431"/>
<dbReference type="DisGeNET" id="283431"/>
<dbReference type="GeneCards" id="GAS2L3"/>
<dbReference type="HGNC" id="HGNC:27475">
    <property type="gene designation" value="GAS2L3"/>
</dbReference>
<dbReference type="HPA" id="ENSG00000139354">
    <property type="expression patterns" value="Low tissue specificity"/>
</dbReference>
<dbReference type="neXtProt" id="NX_Q86XJ1"/>
<dbReference type="OpenTargets" id="ENSG00000139354"/>
<dbReference type="PharmGKB" id="PA134979032"/>
<dbReference type="VEuPathDB" id="HostDB:ENSG00000139354"/>
<dbReference type="eggNOG" id="KOG0516">
    <property type="taxonomic scope" value="Eukaryota"/>
</dbReference>
<dbReference type="GeneTree" id="ENSGT00940000159389"/>
<dbReference type="HOGENOM" id="CLU_025484_3_0_1"/>
<dbReference type="InParanoid" id="Q86XJ1"/>
<dbReference type="OMA" id="MDPMSAV"/>
<dbReference type="OrthoDB" id="2250192at2759"/>
<dbReference type="PAN-GO" id="Q86XJ1">
    <property type="GO annotations" value="4 GO annotations based on evolutionary models"/>
</dbReference>
<dbReference type="PhylomeDB" id="Q86XJ1"/>
<dbReference type="TreeFam" id="TF323754"/>
<dbReference type="PathwayCommons" id="Q86XJ1"/>
<dbReference type="SignaLink" id="Q86XJ1"/>
<dbReference type="SIGNOR" id="Q86XJ1"/>
<dbReference type="BioGRID-ORCS" id="283431">
    <property type="hits" value="7 hits in 1162 CRISPR screens"/>
</dbReference>
<dbReference type="ChiTaRS" id="GAS2L3">
    <property type="organism name" value="human"/>
</dbReference>
<dbReference type="GenomeRNAi" id="283431"/>
<dbReference type="Pharos" id="Q86XJ1">
    <property type="development level" value="Tbio"/>
</dbReference>
<dbReference type="PRO" id="PR:Q86XJ1"/>
<dbReference type="Proteomes" id="UP000005640">
    <property type="component" value="Chromosome 12"/>
</dbReference>
<dbReference type="RNAct" id="Q86XJ1">
    <property type="molecule type" value="protein"/>
</dbReference>
<dbReference type="Bgee" id="ENSG00000139354">
    <property type="expression patterns" value="Expressed in trigeminal ganglion and 162 other cell types or tissues"/>
</dbReference>
<dbReference type="ExpressionAtlas" id="Q86XJ1">
    <property type="expression patterns" value="baseline and differential"/>
</dbReference>
<dbReference type="GO" id="GO:0015629">
    <property type="term" value="C:actin cytoskeleton"/>
    <property type="evidence" value="ECO:0000314"/>
    <property type="project" value="UniProtKB"/>
</dbReference>
<dbReference type="GO" id="GO:0005737">
    <property type="term" value="C:cytoplasm"/>
    <property type="evidence" value="ECO:0007669"/>
    <property type="project" value="UniProtKB-SubCell"/>
</dbReference>
<dbReference type="GO" id="GO:0005874">
    <property type="term" value="C:microtubule"/>
    <property type="evidence" value="ECO:0007669"/>
    <property type="project" value="UniProtKB-KW"/>
</dbReference>
<dbReference type="GO" id="GO:0015630">
    <property type="term" value="C:microtubule cytoskeleton"/>
    <property type="evidence" value="ECO:0000314"/>
    <property type="project" value="UniProtKB"/>
</dbReference>
<dbReference type="GO" id="GO:0003779">
    <property type="term" value="F:actin binding"/>
    <property type="evidence" value="ECO:0000314"/>
    <property type="project" value="UniProtKB"/>
</dbReference>
<dbReference type="GO" id="GO:0051015">
    <property type="term" value="F:actin filament binding"/>
    <property type="evidence" value="ECO:0000318"/>
    <property type="project" value="GO_Central"/>
</dbReference>
<dbReference type="GO" id="GO:0008017">
    <property type="term" value="F:microtubule binding"/>
    <property type="evidence" value="ECO:0000314"/>
    <property type="project" value="UniProtKB"/>
</dbReference>
<dbReference type="GO" id="GO:0051764">
    <property type="term" value="P:actin crosslink formation"/>
    <property type="evidence" value="ECO:0000318"/>
    <property type="project" value="GO_Central"/>
</dbReference>
<dbReference type="GO" id="GO:0030036">
    <property type="term" value="P:actin cytoskeleton organization"/>
    <property type="evidence" value="ECO:0000314"/>
    <property type="project" value="UniProtKB"/>
</dbReference>
<dbReference type="GO" id="GO:0000226">
    <property type="term" value="P:microtubule cytoskeleton organization"/>
    <property type="evidence" value="ECO:0000314"/>
    <property type="project" value="UniProtKB"/>
</dbReference>
<dbReference type="CDD" id="cd21269">
    <property type="entry name" value="CH_GAS2L3"/>
    <property type="match status" value="1"/>
</dbReference>
<dbReference type="FunFam" id="1.10.418.10:FF:000052">
    <property type="entry name" value="Growth arrest specific 2"/>
    <property type="match status" value="1"/>
</dbReference>
<dbReference type="FunFam" id="3.30.920.20:FF:000003">
    <property type="entry name" value="Growth arrest-specific 2 like 3"/>
    <property type="match status" value="1"/>
</dbReference>
<dbReference type="Gene3D" id="1.10.418.10">
    <property type="entry name" value="Calponin-like domain"/>
    <property type="match status" value="1"/>
</dbReference>
<dbReference type="Gene3D" id="3.30.920.20">
    <property type="entry name" value="Gas2-like domain"/>
    <property type="match status" value="1"/>
</dbReference>
<dbReference type="InterPro" id="IPR001715">
    <property type="entry name" value="CH_dom"/>
</dbReference>
<dbReference type="InterPro" id="IPR036872">
    <property type="entry name" value="CH_dom_sf"/>
</dbReference>
<dbReference type="InterPro" id="IPR003108">
    <property type="entry name" value="GAR_dom"/>
</dbReference>
<dbReference type="InterPro" id="IPR036534">
    <property type="entry name" value="GAR_dom_sf"/>
</dbReference>
<dbReference type="PANTHER" id="PTHR46756:SF7">
    <property type="entry name" value="GAS2-LIKE PROTEIN 3"/>
    <property type="match status" value="1"/>
</dbReference>
<dbReference type="PANTHER" id="PTHR46756">
    <property type="entry name" value="TRANSGELIN"/>
    <property type="match status" value="1"/>
</dbReference>
<dbReference type="Pfam" id="PF00307">
    <property type="entry name" value="CH"/>
    <property type="match status" value="1"/>
</dbReference>
<dbReference type="Pfam" id="PF02187">
    <property type="entry name" value="GAS2"/>
    <property type="match status" value="1"/>
</dbReference>
<dbReference type="SMART" id="SM00033">
    <property type="entry name" value="CH"/>
    <property type="match status" value="1"/>
</dbReference>
<dbReference type="SMART" id="SM00243">
    <property type="entry name" value="GAS2"/>
    <property type="match status" value="1"/>
</dbReference>
<dbReference type="SUPFAM" id="SSF47576">
    <property type="entry name" value="Calponin-homology domain, CH-domain"/>
    <property type="match status" value="1"/>
</dbReference>
<dbReference type="SUPFAM" id="SSF143575">
    <property type="entry name" value="GAS2 domain-like"/>
    <property type="match status" value="1"/>
</dbReference>
<dbReference type="PROSITE" id="PS50021">
    <property type="entry name" value="CH"/>
    <property type="match status" value="1"/>
</dbReference>
<dbReference type="PROSITE" id="PS51460">
    <property type="entry name" value="GAR"/>
    <property type="match status" value="1"/>
</dbReference>
<accession>Q86XJ1</accession>
<accession>B2RCN2</accession>
<evidence type="ECO:0000255" key="1">
    <source>
        <dbReference type="PROSITE-ProRule" id="PRU00044"/>
    </source>
</evidence>
<evidence type="ECO:0000255" key="2">
    <source>
        <dbReference type="PROSITE-ProRule" id="PRU00792"/>
    </source>
</evidence>
<evidence type="ECO:0000256" key="3">
    <source>
        <dbReference type="SAM" id="MobiDB-lite"/>
    </source>
</evidence>
<evidence type="ECO:0000269" key="4">
    <source>
    </source>
</evidence>
<evidence type="ECO:0000269" key="5">
    <source>
    </source>
</evidence>
<evidence type="ECO:0000305" key="6"/>
<evidence type="ECO:0007744" key="7">
    <source>
    </source>
</evidence>
<evidence type="ECO:0007744" key="8">
    <source>
    </source>
</evidence>
<feature type="chain" id="PRO_0000190446" description="GAS2-like protein 3">
    <location>
        <begin position="1"/>
        <end position="694"/>
    </location>
</feature>
<feature type="domain" description="Calponin-homology (CH)" evidence="1">
    <location>
        <begin position="48"/>
        <end position="168"/>
    </location>
</feature>
<feature type="domain" description="GAR" evidence="2">
    <location>
        <begin position="208"/>
        <end position="281"/>
    </location>
</feature>
<feature type="region of interest" description="Disordered" evidence="3">
    <location>
        <begin position="299"/>
        <end position="694"/>
    </location>
</feature>
<feature type="compositionally biased region" description="Low complexity" evidence="3">
    <location>
        <begin position="331"/>
        <end position="340"/>
    </location>
</feature>
<feature type="compositionally biased region" description="Polar residues" evidence="3">
    <location>
        <begin position="365"/>
        <end position="379"/>
    </location>
</feature>
<feature type="compositionally biased region" description="Low complexity" evidence="3">
    <location>
        <begin position="397"/>
        <end position="411"/>
    </location>
</feature>
<feature type="compositionally biased region" description="Low complexity" evidence="3">
    <location>
        <begin position="517"/>
        <end position="531"/>
    </location>
</feature>
<feature type="compositionally biased region" description="Low complexity" evidence="3">
    <location>
        <begin position="563"/>
        <end position="572"/>
    </location>
</feature>
<feature type="compositionally biased region" description="Polar residues" evidence="3">
    <location>
        <begin position="584"/>
        <end position="606"/>
    </location>
</feature>
<feature type="compositionally biased region" description="Polar residues" evidence="3">
    <location>
        <begin position="617"/>
        <end position="642"/>
    </location>
</feature>
<feature type="compositionally biased region" description="Basic and acidic residues" evidence="3">
    <location>
        <begin position="663"/>
        <end position="683"/>
    </location>
</feature>
<feature type="modified residue" description="Phosphothreonine" evidence="7">
    <location>
        <position position="441"/>
    </location>
</feature>
<feature type="modified residue" description="Phosphoserine" evidence="7 8">
    <location>
        <position position="570"/>
    </location>
</feature>
<feature type="sequence variant" id="VAR_033944" description="In dbSNP:rs11834625.">
    <original>L</original>
    <variation>S</variation>
    <location>
        <position position="461"/>
    </location>
</feature>
<feature type="sequence variant" id="VAR_033945" description="In dbSNP:rs17030365.">
    <original>P</original>
    <variation>T</variation>
    <location>
        <position position="500"/>
    </location>
</feature>
<feature type="mutagenesis site" description="No effect on microtubule localization and MAPRE1 binding; when associated with 461-N-N-462." evidence="5">
    <original>LP</original>
    <variation>NN</variation>
    <location>
        <begin position="373"/>
        <end position="374"/>
    </location>
</feature>
<feature type="mutagenesis site" description="No effect on microtubule localization and MAPRE1 binding; when associated with 373-N-N-374." evidence="5">
    <original>LP</original>
    <variation>NN</variation>
    <location>
        <begin position="461"/>
        <end position="462"/>
    </location>
</feature>
<proteinExistence type="evidence at protein level"/>
<organism>
    <name type="scientific">Homo sapiens</name>
    <name type="common">Human</name>
    <dbReference type="NCBI Taxonomy" id="9606"/>
    <lineage>
        <taxon>Eukaryota</taxon>
        <taxon>Metazoa</taxon>
        <taxon>Chordata</taxon>
        <taxon>Craniata</taxon>
        <taxon>Vertebrata</taxon>
        <taxon>Euteleostomi</taxon>
        <taxon>Mammalia</taxon>
        <taxon>Eutheria</taxon>
        <taxon>Euarchontoglires</taxon>
        <taxon>Primates</taxon>
        <taxon>Haplorrhini</taxon>
        <taxon>Catarrhini</taxon>
        <taxon>Hominidae</taxon>
        <taxon>Homo</taxon>
    </lineage>
</organism>
<gene>
    <name type="primary">GAS2L3</name>
</gene>
<sequence length="694" mass="75214">MQPAIQVWFGEDLPLSPRSPLTPRHGPGLANVCQYDEWIAVRHEATLLPMQEDLSIWLSGLLGIKVKAEKLLEELDNGVLLCQLIDVLQNMVKTCNSEESGNFPMRKVPCKKDAASGSFFARDNTANFLHWCRDIGVDETYLFESEGLVLHKDPRQVYLCLLEIGRIVSRYGVEPPVLVKLEKEIELEETLLNTSGPEDSISIPKSCCRHEELHEAVKHIAEDPPCSCSHRFSIEYLSEGRYRLGDKILFIRMLHGKHVMVRVGGGWDTLQGFLLKYDPCRILQFATLEQKILAFQKGVSNESVPDSPARTPQPPEMNPLSAVNMFQKQNSKPSVPVSIPKSKEKQGRPPGALVPASSLKGGNLGSMSVRSKLPNSPAASSHPKLKSSKGITKKPQAPSNNASSSLASLNPVGKNTSSPALPRTAPCISESPRKCISSPNTPKAKVIPAQNSADLPESTLLPNKCSGKTQPKYLKHNHISSRDNAVSHLAAHSNSSSKCPKLPKANIPVRPKPSFQSSAKMTKTSSKTIATGLGTQSQPSDGAPQAKPVPAQKLKSALNLNQPVSVSSVSPVKATQKSKDKNIVSATKKQPQNKSAFQKTGPSSLKSPGRTPLSIVSLPQSSTKTQTAPKSAQTVAKSQHSTKGPPRSGKTPASIRKPPSSVKDADSGDKKPTAKKKEDDDHYFVMTGSKKPRK</sequence>
<name>GA2L3_HUMAN</name>
<reference key="1">
    <citation type="journal article" date="2004" name="Nat. Genet.">
        <title>Complete sequencing and characterization of 21,243 full-length human cDNAs.</title>
        <authorList>
            <person name="Ota T."/>
            <person name="Suzuki Y."/>
            <person name="Nishikawa T."/>
            <person name="Otsuki T."/>
            <person name="Sugiyama T."/>
            <person name="Irie R."/>
            <person name="Wakamatsu A."/>
            <person name="Hayashi K."/>
            <person name="Sato H."/>
            <person name="Nagai K."/>
            <person name="Kimura K."/>
            <person name="Makita H."/>
            <person name="Sekine M."/>
            <person name="Obayashi M."/>
            <person name="Nishi T."/>
            <person name="Shibahara T."/>
            <person name="Tanaka T."/>
            <person name="Ishii S."/>
            <person name="Yamamoto J."/>
            <person name="Saito K."/>
            <person name="Kawai Y."/>
            <person name="Isono Y."/>
            <person name="Nakamura Y."/>
            <person name="Nagahari K."/>
            <person name="Murakami K."/>
            <person name="Yasuda T."/>
            <person name="Iwayanagi T."/>
            <person name="Wagatsuma M."/>
            <person name="Shiratori A."/>
            <person name="Sudo H."/>
            <person name="Hosoiri T."/>
            <person name="Kaku Y."/>
            <person name="Kodaira H."/>
            <person name="Kondo H."/>
            <person name="Sugawara M."/>
            <person name="Takahashi M."/>
            <person name="Kanda K."/>
            <person name="Yokoi T."/>
            <person name="Furuya T."/>
            <person name="Kikkawa E."/>
            <person name="Omura Y."/>
            <person name="Abe K."/>
            <person name="Kamihara K."/>
            <person name="Katsuta N."/>
            <person name="Sato K."/>
            <person name="Tanikawa M."/>
            <person name="Yamazaki M."/>
            <person name="Ninomiya K."/>
            <person name="Ishibashi T."/>
            <person name="Yamashita H."/>
            <person name="Murakawa K."/>
            <person name="Fujimori K."/>
            <person name="Tanai H."/>
            <person name="Kimata M."/>
            <person name="Watanabe M."/>
            <person name="Hiraoka S."/>
            <person name="Chiba Y."/>
            <person name="Ishida S."/>
            <person name="Ono Y."/>
            <person name="Takiguchi S."/>
            <person name="Watanabe S."/>
            <person name="Yosida M."/>
            <person name="Hotuta T."/>
            <person name="Kusano J."/>
            <person name="Kanehori K."/>
            <person name="Takahashi-Fujii A."/>
            <person name="Hara H."/>
            <person name="Tanase T.-O."/>
            <person name="Nomura Y."/>
            <person name="Togiya S."/>
            <person name="Komai F."/>
            <person name="Hara R."/>
            <person name="Takeuchi K."/>
            <person name="Arita M."/>
            <person name="Imose N."/>
            <person name="Musashino K."/>
            <person name="Yuuki H."/>
            <person name="Oshima A."/>
            <person name="Sasaki N."/>
            <person name="Aotsuka S."/>
            <person name="Yoshikawa Y."/>
            <person name="Matsunawa H."/>
            <person name="Ichihara T."/>
            <person name="Shiohata N."/>
            <person name="Sano S."/>
            <person name="Moriya S."/>
            <person name="Momiyama H."/>
            <person name="Satoh N."/>
            <person name="Takami S."/>
            <person name="Terashima Y."/>
            <person name="Suzuki O."/>
            <person name="Nakagawa S."/>
            <person name="Senoh A."/>
            <person name="Mizoguchi H."/>
            <person name="Goto Y."/>
            <person name="Shimizu F."/>
            <person name="Wakebe H."/>
            <person name="Hishigaki H."/>
            <person name="Watanabe T."/>
            <person name="Sugiyama A."/>
            <person name="Takemoto M."/>
            <person name="Kawakami B."/>
            <person name="Yamazaki M."/>
            <person name="Watanabe K."/>
            <person name="Kumagai A."/>
            <person name="Itakura S."/>
            <person name="Fukuzumi Y."/>
            <person name="Fujimori Y."/>
            <person name="Komiyama M."/>
            <person name="Tashiro H."/>
            <person name="Tanigami A."/>
            <person name="Fujiwara T."/>
            <person name="Ono T."/>
            <person name="Yamada K."/>
            <person name="Fujii Y."/>
            <person name="Ozaki K."/>
            <person name="Hirao M."/>
            <person name="Ohmori Y."/>
            <person name="Kawabata A."/>
            <person name="Hikiji T."/>
            <person name="Kobatake N."/>
            <person name="Inagaki H."/>
            <person name="Ikema Y."/>
            <person name="Okamoto S."/>
            <person name="Okitani R."/>
            <person name="Kawakami T."/>
            <person name="Noguchi S."/>
            <person name="Itoh T."/>
            <person name="Shigeta K."/>
            <person name="Senba T."/>
            <person name="Matsumura K."/>
            <person name="Nakajima Y."/>
            <person name="Mizuno T."/>
            <person name="Morinaga M."/>
            <person name="Sasaki M."/>
            <person name="Togashi T."/>
            <person name="Oyama M."/>
            <person name="Hata H."/>
            <person name="Watanabe M."/>
            <person name="Komatsu T."/>
            <person name="Mizushima-Sugano J."/>
            <person name="Satoh T."/>
            <person name="Shirai Y."/>
            <person name="Takahashi Y."/>
            <person name="Nakagawa K."/>
            <person name="Okumura K."/>
            <person name="Nagase T."/>
            <person name="Nomura N."/>
            <person name="Kikuchi H."/>
            <person name="Masuho Y."/>
            <person name="Yamashita R."/>
            <person name="Nakai K."/>
            <person name="Yada T."/>
            <person name="Nakamura Y."/>
            <person name="Ohara O."/>
            <person name="Isogai T."/>
            <person name="Sugano S."/>
        </authorList>
    </citation>
    <scope>NUCLEOTIDE SEQUENCE [LARGE SCALE MRNA]</scope>
</reference>
<reference key="2">
    <citation type="submission" date="2005-07" db="EMBL/GenBank/DDBJ databases">
        <authorList>
            <person name="Mural R.J."/>
            <person name="Istrail S."/>
            <person name="Sutton G.G."/>
            <person name="Florea L."/>
            <person name="Halpern A.L."/>
            <person name="Mobarry C.M."/>
            <person name="Lippert R."/>
            <person name="Walenz B."/>
            <person name="Shatkay H."/>
            <person name="Dew I."/>
            <person name="Miller J.R."/>
            <person name="Flanigan M.J."/>
            <person name="Edwards N.J."/>
            <person name="Bolanos R."/>
            <person name="Fasulo D."/>
            <person name="Halldorsson B.V."/>
            <person name="Hannenhalli S."/>
            <person name="Turner R."/>
            <person name="Yooseph S."/>
            <person name="Lu F."/>
            <person name="Nusskern D.R."/>
            <person name="Shue B.C."/>
            <person name="Zheng X.H."/>
            <person name="Zhong F."/>
            <person name="Delcher A.L."/>
            <person name="Huson D.H."/>
            <person name="Kravitz S.A."/>
            <person name="Mouchard L."/>
            <person name="Reinert K."/>
            <person name="Remington K.A."/>
            <person name="Clark A.G."/>
            <person name="Waterman M.S."/>
            <person name="Eichler E.E."/>
            <person name="Adams M.D."/>
            <person name="Hunkapiller M.W."/>
            <person name="Myers E.W."/>
            <person name="Venter J.C."/>
        </authorList>
    </citation>
    <scope>NUCLEOTIDE SEQUENCE [LARGE SCALE GENOMIC DNA]</scope>
</reference>
<reference key="3">
    <citation type="journal article" date="2004" name="Genome Res.">
        <title>The status, quality, and expansion of the NIH full-length cDNA project: the Mammalian Gene Collection (MGC).</title>
        <authorList>
            <consortium name="The MGC Project Team"/>
        </authorList>
    </citation>
    <scope>NUCLEOTIDE SEQUENCE [LARGE SCALE MRNA]</scope>
    <source>
        <tissue>Cervix</tissue>
    </source>
</reference>
<reference key="4">
    <citation type="journal article" date="2008" name="Proc. Natl. Acad. Sci. U.S.A.">
        <title>A quantitative atlas of mitotic phosphorylation.</title>
        <authorList>
            <person name="Dephoure N."/>
            <person name="Zhou C."/>
            <person name="Villen J."/>
            <person name="Beausoleil S.A."/>
            <person name="Bakalarski C.E."/>
            <person name="Elledge S.J."/>
            <person name="Gygi S.P."/>
        </authorList>
    </citation>
    <scope>PHOSPHORYLATION [LARGE SCALE ANALYSIS] AT THR-441 AND SER-570</scope>
    <scope>IDENTIFICATION BY MASS SPECTROMETRY [LARGE SCALE ANALYSIS]</scope>
    <source>
        <tissue>Cervix carcinoma</tissue>
    </source>
</reference>
<reference key="5">
    <citation type="journal article" date="2010" name="Sci. Signal.">
        <title>Quantitative phosphoproteomics reveals widespread full phosphorylation site occupancy during mitosis.</title>
        <authorList>
            <person name="Olsen J.V."/>
            <person name="Vermeulen M."/>
            <person name="Santamaria A."/>
            <person name="Kumar C."/>
            <person name="Miller M.L."/>
            <person name="Jensen L.J."/>
            <person name="Gnad F."/>
            <person name="Cox J."/>
            <person name="Jensen T.S."/>
            <person name="Nigg E.A."/>
            <person name="Brunak S."/>
            <person name="Mann M."/>
        </authorList>
    </citation>
    <scope>IDENTIFICATION BY MASS SPECTROMETRY [LARGE SCALE ANALYSIS]</scope>
    <source>
        <tissue>Cervix carcinoma</tissue>
    </source>
</reference>
<reference key="6">
    <citation type="journal article" date="2011" name="J. Biol. Chem.">
        <title>Characterization of G2L3 (GAS2-like 3), a new microtubule- and actin-binding protein related to spectraplakins.</title>
        <authorList>
            <person name="Stroud M.J."/>
            <person name="Kammerer R.A."/>
            <person name="Ballestrem C."/>
        </authorList>
    </citation>
    <scope>FUNCTION</scope>
    <scope>INTERACTION WITH ACTIN AND MICROTUBULES</scope>
    <scope>SUBCELLULAR LOCATION</scope>
    <scope>TISSUE SPECIFICITY</scope>
    <scope>DOMAIN</scope>
</reference>
<reference key="7">
    <citation type="journal article" date="2013" name="J. Proteome Res.">
        <title>Toward a comprehensive characterization of a human cancer cell phosphoproteome.</title>
        <authorList>
            <person name="Zhou H."/>
            <person name="Di Palma S."/>
            <person name="Preisinger C."/>
            <person name="Peng M."/>
            <person name="Polat A.N."/>
            <person name="Heck A.J."/>
            <person name="Mohammed S."/>
        </authorList>
    </citation>
    <scope>PHOSPHORYLATION [LARGE SCALE ANALYSIS] AT SER-570</scope>
    <scope>IDENTIFICATION BY MASS SPECTROMETRY [LARGE SCALE ANALYSIS]</scope>
    <source>
        <tissue>Cervix carcinoma</tissue>
        <tissue>Erythroleukemia</tissue>
    </source>
</reference>
<reference key="8">
    <citation type="journal article" date="2014" name="J. Cell Sci.">
        <title>GAS2-like proteins mediate communication between microtubules and actin through interactions with end-binding proteins.</title>
        <authorList>
            <person name="Stroud M.J."/>
            <person name="Nazgiewicz A."/>
            <person name="McKenzie E.A."/>
            <person name="Wang Y."/>
            <person name="Kammerer R.A."/>
            <person name="Ballestrem C."/>
        </authorList>
    </citation>
    <scope>INTERACTION WITH MAPRE1</scope>
    <scope>SUBCELLULAR LOCATION</scope>
    <scope>MUTAGENESIS OF 373-ILE-PRO-374 AND 461-ILE-PRO-462</scope>
</reference>
<protein>
    <recommendedName>
        <fullName>GAS2-like protein 3</fullName>
    </recommendedName>
    <alternativeName>
        <fullName>Growth arrest-specific protein 2-like 3</fullName>
    </alternativeName>
</protein>
<keyword id="KW-0009">Actin-binding</keyword>
<keyword id="KW-0963">Cytoplasm</keyword>
<keyword id="KW-0206">Cytoskeleton</keyword>
<keyword id="KW-0493">Microtubule</keyword>
<keyword id="KW-0597">Phosphoprotein</keyword>
<keyword id="KW-1267">Proteomics identification</keyword>
<keyword id="KW-1185">Reference proteome</keyword>
<comment type="function">
    <text evidence="4">Cytoskeletal linker protein. May promote and stabilize the formation of the actin and microtubule network.</text>
</comment>
<comment type="subunit">
    <text evidence="4 5">Interacts (via CH domain) with F-actin (PubMed:21561867). Interacts (via C terminus) with microtubules (PubMed:21561867). Interacts with MAPRE1 (PubMed:24706950).</text>
</comment>
<comment type="interaction">
    <interactant intactId="EBI-9248152">
        <id>Q86XJ1</id>
    </interactant>
    <interactant intactId="EBI-624291">
        <id>Q96GD4</id>
        <label>AURKB</label>
    </interactant>
    <organismsDiffer>false</organismsDiffer>
    <experiments>4</experiments>
</comment>
<comment type="interaction">
    <interactant intactId="EBI-9248152">
        <id>Q86XJ1</id>
    </interactant>
    <interactant intactId="EBI-518823">
        <id>O15392</id>
        <label>BIRC5</label>
    </interactant>
    <organismsDiffer>false</organismsDiffer>
    <experiments>4</experiments>
</comment>
<comment type="interaction">
    <interactant intactId="EBI-9248152">
        <id>Q86XJ1</id>
    </interactant>
    <interactant intactId="EBI-979174">
        <id>Q53HL2</id>
        <label>CDCA8</label>
    </interactant>
    <organismsDiffer>false</organismsDiffer>
    <experiments>2</experiments>
</comment>
<comment type="interaction">
    <interactant intactId="EBI-9248152">
        <id>Q86XJ1</id>
    </interactant>
    <interactant intactId="EBI-10242151">
        <id>Q53EP0-3</id>
        <label>FNDC3B</label>
    </interactant>
    <organismsDiffer>false</organismsDiffer>
    <experiments>3</experiments>
</comment>
<comment type="interaction">
    <interactant intactId="EBI-9248152">
        <id>Q86XJ1</id>
    </interactant>
    <interactant intactId="EBI-300817">
        <id>P60660</id>
        <label>MYL6</label>
    </interactant>
    <organismsDiffer>false</organismsDiffer>
    <experiments>3</experiments>
</comment>
<comment type="interaction">
    <interactant intactId="EBI-9248152">
        <id>Q86XJ1</id>
    </interactant>
    <interactant intactId="EBI-746981">
        <id>Q969E8</id>
        <label>TSR2</label>
    </interactant>
    <organismsDiffer>false</organismsDiffer>
    <experiments>3</experiments>
</comment>
<comment type="interaction">
    <interactant intactId="EBI-9248152">
        <id>Q86XJ1</id>
    </interactant>
    <interactant intactId="EBI-11963196">
        <id>Q15915</id>
        <label>ZIC1</label>
    </interactant>
    <organismsDiffer>false</organismsDiffer>
    <experiments>3</experiments>
</comment>
<comment type="subcellular location">
    <subcellularLocation>
        <location evidence="4">Cytoplasm</location>
    </subcellularLocation>
    <subcellularLocation>
        <location evidence="4 5">Cytoplasm</location>
        <location evidence="4 5">Cytoskeleton</location>
    </subcellularLocation>
    <text evidence="4 5">Localizes to microtubule and actin cytoskeletons.</text>
</comment>
<comment type="tissue specificity">
    <text evidence="4">Expressed in the pancreas, heart, liver, placenta, brain, skeletal muscle, kidney and lung.</text>
</comment>
<comment type="domain">
    <text evidence="4">The GAR domain modulates the binding strength to each cytoskeletal network.</text>
</comment>
<comment type="similarity">
    <text evidence="6">Belongs to the GAS2 family.</text>
</comment>